<protein>
    <recommendedName>
        <fullName evidence="1">Tetraacyldisaccharide 4'-kinase</fullName>
        <ecNumber evidence="1">2.7.1.130</ecNumber>
    </recommendedName>
    <alternativeName>
        <fullName evidence="1">Lipid A 4'-kinase</fullName>
    </alternativeName>
</protein>
<evidence type="ECO:0000255" key="1">
    <source>
        <dbReference type="HAMAP-Rule" id="MF_00409"/>
    </source>
</evidence>
<name>LPXK_XANP2</name>
<proteinExistence type="inferred from homology"/>
<comment type="function">
    <text evidence="1">Transfers the gamma-phosphate of ATP to the 4'-position of a tetraacyldisaccharide 1-phosphate intermediate (termed DS-1-P) to form tetraacyldisaccharide 1,4'-bis-phosphate (lipid IVA).</text>
</comment>
<comment type="catalytic activity">
    <reaction evidence="1">
        <text>a lipid A disaccharide + ATP = a lipid IVA + ADP + H(+)</text>
        <dbReference type="Rhea" id="RHEA:67840"/>
        <dbReference type="ChEBI" id="CHEBI:15378"/>
        <dbReference type="ChEBI" id="CHEBI:30616"/>
        <dbReference type="ChEBI" id="CHEBI:176343"/>
        <dbReference type="ChEBI" id="CHEBI:176425"/>
        <dbReference type="ChEBI" id="CHEBI:456216"/>
        <dbReference type="EC" id="2.7.1.130"/>
    </reaction>
</comment>
<comment type="pathway">
    <text evidence="1">Glycolipid biosynthesis; lipid IV(A) biosynthesis; lipid IV(A) from (3R)-3-hydroxytetradecanoyl-[acyl-carrier-protein] and UDP-N-acetyl-alpha-D-glucosamine: step 6/6.</text>
</comment>
<comment type="similarity">
    <text evidence="1">Belongs to the LpxK family.</text>
</comment>
<accession>A7IFD6</accession>
<reference key="1">
    <citation type="submission" date="2007-07" db="EMBL/GenBank/DDBJ databases">
        <title>Complete sequence of chromosome of Xanthobacter autotrophicus Py2.</title>
        <authorList>
            <consortium name="US DOE Joint Genome Institute"/>
            <person name="Copeland A."/>
            <person name="Lucas S."/>
            <person name="Lapidus A."/>
            <person name="Barry K."/>
            <person name="Glavina del Rio T."/>
            <person name="Hammon N."/>
            <person name="Israni S."/>
            <person name="Dalin E."/>
            <person name="Tice H."/>
            <person name="Pitluck S."/>
            <person name="Sims D."/>
            <person name="Brettin T."/>
            <person name="Bruce D."/>
            <person name="Detter J.C."/>
            <person name="Han C."/>
            <person name="Tapia R."/>
            <person name="Brainard J."/>
            <person name="Schmutz J."/>
            <person name="Larimer F."/>
            <person name="Land M."/>
            <person name="Hauser L."/>
            <person name="Kyrpides N."/>
            <person name="Kim E."/>
            <person name="Ensigns S.A."/>
            <person name="Richardson P."/>
        </authorList>
    </citation>
    <scope>NUCLEOTIDE SEQUENCE [LARGE SCALE GENOMIC DNA]</scope>
    <source>
        <strain>ATCC BAA-1158 / Py2</strain>
    </source>
</reference>
<keyword id="KW-0067">ATP-binding</keyword>
<keyword id="KW-0418">Kinase</keyword>
<keyword id="KW-0441">Lipid A biosynthesis</keyword>
<keyword id="KW-0444">Lipid biosynthesis</keyword>
<keyword id="KW-0443">Lipid metabolism</keyword>
<keyword id="KW-0547">Nucleotide-binding</keyword>
<keyword id="KW-1185">Reference proteome</keyword>
<keyword id="KW-0808">Transferase</keyword>
<feature type="chain" id="PRO_1000134753" description="Tetraacyldisaccharide 4'-kinase">
    <location>
        <begin position="1"/>
        <end position="343"/>
    </location>
</feature>
<feature type="binding site" evidence="1">
    <location>
        <begin position="51"/>
        <end position="58"/>
    </location>
    <ligand>
        <name>ATP</name>
        <dbReference type="ChEBI" id="CHEBI:30616"/>
    </ligand>
</feature>
<organism>
    <name type="scientific">Xanthobacter autotrophicus (strain ATCC BAA-1158 / Py2)</name>
    <dbReference type="NCBI Taxonomy" id="78245"/>
    <lineage>
        <taxon>Bacteria</taxon>
        <taxon>Pseudomonadati</taxon>
        <taxon>Pseudomonadota</taxon>
        <taxon>Alphaproteobacteria</taxon>
        <taxon>Hyphomicrobiales</taxon>
        <taxon>Xanthobacteraceae</taxon>
        <taxon>Xanthobacter</taxon>
    </lineage>
</organism>
<gene>
    <name evidence="1" type="primary">lpxK</name>
    <name type="ordered locus">Xaut_1481</name>
</gene>
<sequence>MRAPAFWWRRPGVASALLSPIGAVVGAVALARMGKAGGRVDAPVLCIGNPTVGGAGKTPTAIALLDRLTARGATPFALLRGHGGSAPMPLRVDPAIHGADAVGDEALLLARHAPTIVAGGARLAGAAMAVETGASHIVMDDGFQNPSLHKDVSVLVVDGMVGVGNACVTPAGPLRAPLLPQLARADAVLVVGDGSAGDRVAAEATQAGCTVLRGWLVPDPAAVAALHGIPLIAFAGIGRPEKFFATLEREGLALLARHAFADHHPFRPAEIARLVEAARAQGARLVTTEKDRARLTGPAFAGPEFSGVLDAIAPLPVTLALDAPHALDALVDRAEARFQARRT</sequence>
<dbReference type="EC" id="2.7.1.130" evidence="1"/>
<dbReference type="EMBL" id="CP000781">
    <property type="protein sequence ID" value="ABS66729.1"/>
    <property type="molecule type" value="Genomic_DNA"/>
</dbReference>
<dbReference type="SMR" id="A7IFD6"/>
<dbReference type="STRING" id="78245.Xaut_1481"/>
<dbReference type="KEGG" id="xau:Xaut_1481"/>
<dbReference type="eggNOG" id="COG1663">
    <property type="taxonomic scope" value="Bacteria"/>
</dbReference>
<dbReference type="HOGENOM" id="CLU_038816_0_0_5"/>
<dbReference type="OrthoDB" id="9766423at2"/>
<dbReference type="PhylomeDB" id="A7IFD6"/>
<dbReference type="UniPathway" id="UPA00359">
    <property type="reaction ID" value="UER00482"/>
</dbReference>
<dbReference type="Proteomes" id="UP000002417">
    <property type="component" value="Chromosome"/>
</dbReference>
<dbReference type="GO" id="GO:0005886">
    <property type="term" value="C:plasma membrane"/>
    <property type="evidence" value="ECO:0007669"/>
    <property type="project" value="TreeGrafter"/>
</dbReference>
<dbReference type="GO" id="GO:0005524">
    <property type="term" value="F:ATP binding"/>
    <property type="evidence" value="ECO:0007669"/>
    <property type="project" value="UniProtKB-UniRule"/>
</dbReference>
<dbReference type="GO" id="GO:0009029">
    <property type="term" value="F:tetraacyldisaccharide 4'-kinase activity"/>
    <property type="evidence" value="ECO:0007669"/>
    <property type="project" value="UniProtKB-UniRule"/>
</dbReference>
<dbReference type="GO" id="GO:0009245">
    <property type="term" value="P:lipid A biosynthetic process"/>
    <property type="evidence" value="ECO:0007669"/>
    <property type="project" value="UniProtKB-UniRule"/>
</dbReference>
<dbReference type="GO" id="GO:0009244">
    <property type="term" value="P:lipopolysaccharide core region biosynthetic process"/>
    <property type="evidence" value="ECO:0007669"/>
    <property type="project" value="TreeGrafter"/>
</dbReference>
<dbReference type="HAMAP" id="MF_00409">
    <property type="entry name" value="LpxK"/>
    <property type="match status" value="1"/>
</dbReference>
<dbReference type="InterPro" id="IPR003758">
    <property type="entry name" value="LpxK"/>
</dbReference>
<dbReference type="InterPro" id="IPR027417">
    <property type="entry name" value="P-loop_NTPase"/>
</dbReference>
<dbReference type="NCBIfam" id="TIGR00682">
    <property type="entry name" value="lpxK"/>
    <property type="match status" value="1"/>
</dbReference>
<dbReference type="PANTHER" id="PTHR42724">
    <property type="entry name" value="TETRAACYLDISACCHARIDE 4'-KINASE"/>
    <property type="match status" value="1"/>
</dbReference>
<dbReference type="PANTHER" id="PTHR42724:SF1">
    <property type="entry name" value="TETRAACYLDISACCHARIDE 4'-KINASE, MITOCHONDRIAL-RELATED"/>
    <property type="match status" value="1"/>
</dbReference>
<dbReference type="Pfam" id="PF02606">
    <property type="entry name" value="LpxK"/>
    <property type="match status" value="1"/>
</dbReference>
<dbReference type="SUPFAM" id="SSF52540">
    <property type="entry name" value="P-loop containing nucleoside triphosphate hydrolases"/>
    <property type="match status" value="1"/>
</dbReference>